<evidence type="ECO:0000255" key="1"/>
<evidence type="ECO:0000305" key="2"/>
<gene>
    <name type="primary">citN</name>
    <name type="synonym">citH</name>
    <name type="synonym">yxiQ</name>
    <name type="ordered locus">BSU39060</name>
    <name type="ORF">N15CR</name>
</gene>
<name>CITN_BACSU</name>
<accession>P42308</accession>
<proteinExistence type="evidence at protein level"/>
<feature type="chain" id="PRO_0000089775" description="Citrate transporter">
    <location>
        <begin position="1"/>
        <end position="426"/>
    </location>
</feature>
<feature type="transmembrane region" description="Helical" evidence="1">
    <location>
        <begin position="1"/>
        <end position="21"/>
    </location>
</feature>
<feature type="transmembrane region" description="Helical" evidence="1">
    <location>
        <begin position="22"/>
        <end position="42"/>
    </location>
</feature>
<feature type="transmembrane region" description="Helical" evidence="1">
    <location>
        <begin position="59"/>
        <end position="79"/>
    </location>
</feature>
<feature type="transmembrane region" description="Helical" evidence="1">
    <location>
        <begin position="86"/>
        <end position="106"/>
    </location>
</feature>
<feature type="transmembrane region" description="Helical" evidence="1">
    <location>
        <begin position="137"/>
        <end position="157"/>
    </location>
</feature>
<feature type="transmembrane region" description="Helical" evidence="1">
    <location>
        <begin position="176"/>
        <end position="196"/>
    </location>
</feature>
<feature type="transmembrane region" description="Helical" evidence="1">
    <location>
        <begin position="232"/>
        <end position="252"/>
    </location>
</feature>
<feature type="transmembrane region" description="Helical" evidence="1">
    <location>
        <begin position="278"/>
        <end position="298"/>
    </location>
</feature>
<feature type="transmembrane region" description="Helical" evidence="1">
    <location>
        <begin position="318"/>
        <end position="338"/>
    </location>
</feature>
<feature type="transmembrane region" description="Helical" evidence="1">
    <location>
        <begin position="343"/>
        <end position="363"/>
    </location>
</feature>
<feature type="transmembrane region" description="Helical" evidence="1">
    <location>
        <begin position="377"/>
        <end position="397"/>
    </location>
</feature>
<feature type="transmembrane region" description="Helical" evidence="1">
    <location>
        <begin position="406"/>
        <end position="426"/>
    </location>
</feature>
<feature type="sequence conflict" description="In Ref. 1; BAA11698." evidence="2" ref="1">
    <original>L</original>
    <variation>F</variation>
    <location>
        <position position="95"/>
    </location>
</feature>
<feature type="sequence conflict" description="In Ref. 1; BAA11698." evidence="2" ref="1">
    <original>A</original>
    <variation>R</variation>
    <location>
        <position position="123"/>
    </location>
</feature>
<feature type="sequence conflict" description="In Ref. 1; BAA11698." evidence="2" ref="1">
    <original>G</original>
    <variation>E</variation>
    <location>
        <position position="157"/>
    </location>
</feature>
<feature type="sequence conflict" description="In Ref. 1; BAA11698." evidence="2" ref="1">
    <original>LV</original>
    <variation>TR</variation>
    <location>
        <begin position="311"/>
        <end position="312"/>
    </location>
</feature>
<keyword id="KW-1003">Cell membrane</keyword>
<keyword id="KW-0163">Citrate utilization</keyword>
<keyword id="KW-0472">Membrane</keyword>
<keyword id="KW-1185">Reference proteome</keyword>
<keyword id="KW-0769">Symport</keyword>
<keyword id="KW-0812">Transmembrane</keyword>
<keyword id="KW-1133">Transmembrane helix</keyword>
<keyword id="KW-0813">Transport</keyword>
<protein>
    <recommendedName>
        <fullName>Citrate transporter</fullName>
    </recommendedName>
</protein>
<reference key="1">
    <citation type="journal article" date="1996" name="Microbiology">
        <title>Sequencing of a 65 kb region of the Bacillus subtilis genome containing the lic and cel loci, and creation of a 177 kb contig covering the gnt-sacXY region.</title>
        <authorList>
            <person name="Yoshida K."/>
            <person name="Shindo K."/>
            <person name="Sano H."/>
            <person name="Seki S."/>
            <person name="Fujimura M."/>
            <person name="Yanai N."/>
            <person name="Miwa Y."/>
            <person name="Fujita Y."/>
        </authorList>
    </citation>
    <scope>NUCLEOTIDE SEQUENCE [GENOMIC DNA]</scope>
    <source>
        <strain>168 / BGSC1A1</strain>
    </source>
</reference>
<reference key="2">
    <citation type="journal article" date="1997" name="Nature">
        <title>The complete genome sequence of the Gram-positive bacterium Bacillus subtilis.</title>
        <authorList>
            <person name="Kunst F."/>
            <person name="Ogasawara N."/>
            <person name="Moszer I."/>
            <person name="Albertini A.M."/>
            <person name="Alloni G."/>
            <person name="Azevedo V."/>
            <person name="Bertero M.G."/>
            <person name="Bessieres P."/>
            <person name="Bolotin A."/>
            <person name="Borchert S."/>
            <person name="Borriss R."/>
            <person name="Boursier L."/>
            <person name="Brans A."/>
            <person name="Braun M."/>
            <person name="Brignell S.C."/>
            <person name="Bron S."/>
            <person name="Brouillet S."/>
            <person name="Bruschi C.V."/>
            <person name="Caldwell B."/>
            <person name="Capuano V."/>
            <person name="Carter N.M."/>
            <person name="Choi S.-K."/>
            <person name="Codani J.-J."/>
            <person name="Connerton I.F."/>
            <person name="Cummings N.J."/>
            <person name="Daniel R.A."/>
            <person name="Denizot F."/>
            <person name="Devine K.M."/>
            <person name="Duesterhoeft A."/>
            <person name="Ehrlich S.D."/>
            <person name="Emmerson P.T."/>
            <person name="Entian K.-D."/>
            <person name="Errington J."/>
            <person name="Fabret C."/>
            <person name="Ferrari E."/>
            <person name="Foulger D."/>
            <person name="Fritz C."/>
            <person name="Fujita M."/>
            <person name="Fujita Y."/>
            <person name="Fuma S."/>
            <person name="Galizzi A."/>
            <person name="Galleron N."/>
            <person name="Ghim S.-Y."/>
            <person name="Glaser P."/>
            <person name="Goffeau A."/>
            <person name="Golightly E.J."/>
            <person name="Grandi G."/>
            <person name="Guiseppi G."/>
            <person name="Guy B.J."/>
            <person name="Haga K."/>
            <person name="Haiech J."/>
            <person name="Harwood C.R."/>
            <person name="Henaut A."/>
            <person name="Hilbert H."/>
            <person name="Holsappel S."/>
            <person name="Hosono S."/>
            <person name="Hullo M.-F."/>
            <person name="Itaya M."/>
            <person name="Jones L.-M."/>
            <person name="Joris B."/>
            <person name="Karamata D."/>
            <person name="Kasahara Y."/>
            <person name="Klaerr-Blanchard M."/>
            <person name="Klein C."/>
            <person name="Kobayashi Y."/>
            <person name="Koetter P."/>
            <person name="Koningstein G."/>
            <person name="Krogh S."/>
            <person name="Kumano M."/>
            <person name="Kurita K."/>
            <person name="Lapidus A."/>
            <person name="Lardinois S."/>
            <person name="Lauber J."/>
            <person name="Lazarevic V."/>
            <person name="Lee S.-M."/>
            <person name="Levine A."/>
            <person name="Liu H."/>
            <person name="Masuda S."/>
            <person name="Mauel C."/>
            <person name="Medigue C."/>
            <person name="Medina N."/>
            <person name="Mellado R.P."/>
            <person name="Mizuno M."/>
            <person name="Moestl D."/>
            <person name="Nakai S."/>
            <person name="Noback M."/>
            <person name="Noone D."/>
            <person name="O'Reilly M."/>
            <person name="Ogawa K."/>
            <person name="Ogiwara A."/>
            <person name="Oudega B."/>
            <person name="Park S.-H."/>
            <person name="Parro V."/>
            <person name="Pohl T.M."/>
            <person name="Portetelle D."/>
            <person name="Porwollik S."/>
            <person name="Prescott A.M."/>
            <person name="Presecan E."/>
            <person name="Pujic P."/>
            <person name="Purnelle B."/>
            <person name="Rapoport G."/>
            <person name="Rey M."/>
            <person name="Reynolds S."/>
            <person name="Rieger M."/>
            <person name="Rivolta C."/>
            <person name="Rocha E."/>
            <person name="Roche B."/>
            <person name="Rose M."/>
            <person name="Sadaie Y."/>
            <person name="Sato T."/>
            <person name="Scanlan E."/>
            <person name="Schleich S."/>
            <person name="Schroeter R."/>
            <person name="Scoffone F."/>
            <person name="Sekiguchi J."/>
            <person name="Sekowska A."/>
            <person name="Seror S.J."/>
            <person name="Serror P."/>
            <person name="Shin B.-S."/>
            <person name="Soldo B."/>
            <person name="Sorokin A."/>
            <person name="Tacconi E."/>
            <person name="Takagi T."/>
            <person name="Takahashi H."/>
            <person name="Takemaru K."/>
            <person name="Takeuchi M."/>
            <person name="Tamakoshi A."/>
            <person name="Tanaka T."/>
            <person name="Terpstra P."/>
            <person name="Tognoni A."/>
            <person name="Tosato V."/>
            <person name="Uchiyama S."/>
            <person name="Vandenbol M."/>
            <person name="Vannier F."/>
            <person name="Vassarotti A."/>
            <person name="Viari A."/>
            <person name="Wambutt R."/>
            <person name="Wedler E."/>
            <person name="Wedler H."/>
            <person name="Weitzenegger T."/>
            <person name="Winters P."/>
            <person name="Wipat A."/>
            <person name="Yamamoto H."/>
            <person name="Yamane K."/>
            <person name="Yasumoto K."/>
            <person name="Yata K."/>
            <person name="Yoshida K."/>
            <person name="Yoshikawa H.-F."/>
            <person name="Zumstein E."/>
            <person name="Yoshikawa H."/>
            <person name="Danchin A."/>
        </authorList>
    </citation>
    <scope>NUCLEOTIDE SEQUENCE [LARGE SCALE GENOMIC DNA]</scope>
    <source>
        <strain>168</strain>
    </source>
</reference>
<reference key="3">
    <citation type="journal article" date="2009" name="Microbiology">
        <title>From a consortium sequence to a unified sequence: the Bacillus subtilis 168 reference genome a decade later.</title>
        <authorList>
            <person name="Barbe V."/>
            <person name="Cruveiller S."/>
            <person name="Kunst F."/>
            <person name="Lenoble P."/>
            <person name="Meurice G."/>
            <person name="Sekowska A."/>
            <person name="Vallenet D."/>
            <person name="Wang T."/>
            <person name="Moszer I."/>
            <person name="Medigue C."/>
            <person name="Danchin A."/>
        </authorList>
    </citation>
    <scope>SEQUENCE REVISION TO 95; 123; 157 AND 311-312</scope>
</reference>
<reference key="4">
    <citation type="journal article" date="1995" name="Microbiology">
        <title>Genes encoding xylan and beta-glucan hydrolysing enzymes in Bacillus subtilis: characterization, mapping and construction of strains deficient in lichenase, cellulase and xylanase.</title>
        <authorList>
            <person name="Wolf M."/>
            <person name="Geczi A."/>
            <person name="Simon O."/>
            <person name="Borriss R."/>
        </authorList>
    </citation>
    <scope>NUCLEOTIDE SEQUENCE [GENOMIC DNA] OF 330-426</scope>
    <source>
        <strain>168</strain>
    </source>
</reference>
<reference key="5">
    <citation type="journal article" date="1996" name="J. Bacteriol.">
        <title>Secondary transporters for citrate and the Mg(2+)-citrate complex in Bacillus subtilis are homologous proteins.</title>
        <authorList>
            <person name="Boorsma A."/>
            <person name="van der Rest M.E."/>
            <person name="Lolkema J.S."/>
            <person name="Konings W.N."/>
        </authorList>
    </citation>
    <scope>CHARACTERIZATION</scope>
</reference>
<sequence length="426" mass="45300">MLAILGFVMMIVFMYLIMSNRLSALIALIVVPIVFALISGFGKDLGEMMIQGVTDLAPTGIMLLFAILYFGIMIDSGLFDPLIAKILSFVKGDPLKIAVGTAVLTMTISLDGDGTTTYMITIAAMLPLYKRLGMNRLVLAGIAMLGSGVMNIIPWGGPTARVLASLKLDTSEVFTPLIPAMIAGILWVIAVAYILGKKERKRLGVISIDHAPSSDPEAAPLKRPALQWFNLLLTVALMAALITSLLPLPVLFMTAFAVALMVNYPNVKEQQKRISAHAGNALNVVSMVFAAGIFTGILSGTKMVDAMAHSLVSLIPDAMGPHLPLITAIVSMPFTFFMSNDAFYFGVLPIIAEAASAYGIDAAEIGRASLLGQPVHLLSPLVPSTYLLVGMAGVSFGDHQKFTIKWAVGTTIVMTIAALLIGIISF</sequence>
<dbReference type="EMBL" id="D83026">
    <property type="protein sequence ID" value="BAA11698.1"/>
    <property type="molecule type" value="Genomic_DNA"/>
</dbReference>
<dbReference type="EMBL" id="AL009126">
    <property type="protein sequence ID" value="CAB15932.2"/>
    <property type="molecule type" value="Genomic_DNA"/>
</dbReference>
<dbReference type="EMBL" id="Z46862">
    <property type="status" value="NOT_ANNOTATED_CDS"/>
    <property type="molecule type" value="Genomic_DNA"/>
</dbReference>
<dbReference type="PIR" id="D70078">
    <property type="entry name" value="D70078"/>
</dbReference>
<dbReference type="RefSeq" id="NP_391785.2">
    <property type="nucleotide sequence ID" value="NC_000964.3"/>
</dbReference>
<dbReference type="RefSeq" id="WP_003227205.1">
    <property type="nucleotide sequence ID" value="NZ_OZ025638.1"/>
</dbReference>
<dbReference type="SMR" id="P42308"/>
<dbReference type="FunCoup" id="P42308">
    <property type="interactions" value="6"/>
</dbReference>
<dbReference type="STRING" id="224308.BSU39060"/>
<dbReference type="TCDB" id="2.A.11.1.2">
    <property type="family name" value="the citrate-mg(2+):h(+) (citm) citrate-ca(2+):h(+) (cith) symporter (citmhs) family"/>
</dbReference>
<dbReference type="PaxDb" id="224308-BSU39060"/>
<dbReference type="EnsemblBacteria" id="CAB15932">
    <property type="protein sequence ID" value="CAB15932"/>
    <property type="gene ID" value="BSU_39060"/>
</dbReference>
<dbReference type="GeneID" id="937469"/>
<dbReference type="KEGG" id="bsu:BSU39060"/>
<dbReference type="PATRIC" id="fig|224308.179.peg.4229"/>
<dbReference type="eggNOG" id="COG2851">
    <property type="taxonomic scope" value="Bacteria"/>
</dbReference>
<dbReference type="InParanoid" id="P42308"/>
<dbReference type="OrthoDB" id="5329450at2"/>
<dbReference type="PhylomeDB" id="P42308"/>
<dbReference type="BioCyc" id="BSUB:BSU39060-MONOMER"/>
<dbReference type="Proteomes" id="UP000001570">
    <property type="component" value="Chromosome"/>
</dbReference>
<dbReference type="GO" id="GO:0005886">
    <property type="term" value="C:plasma membrane"/>
    <property type="evidence" value="ECO:0000318"/>
    <property type="project" value="GO_Central"/>
</dbReference>
<dbReference type="GO" id="GO:0015137">
    <property type="term" value="F:citrate transmembrane transporter activity"/>
    <property type="evidence" value="ECO:0007669"/>
    <property type="project" value="InterPro"/>
</dbReference>
<dbReference type="GO" id="GO:0015293">
    <property type="term" value="F:symporter activity"/>
    <property type="evidence" value="ECO:0007669"/>
    <property type="project" value="UniProtKB-KW"/>
</dbReference>
<dbReference type="GO" id="GO:0022857">
    <property type="term" value="F:transmembrane transporter activity"/>
    <property type="evidence" value="ECO:0000318"/>
    <property type="project" value="GO_Central"/>
</dbReference>
<dbReference type="GO" id="GO:0006101">
    <property type="term" value="P:citrate metabolic process"/>
    <property type="evidence" value="ECO:0007669"/>
    <property type="project" value="UniProtKB-KW"/>
</dbReference>
<dbReference type="GO" id="GO:0055085">
    <property type="term" value="P:transmembrane transport"/>
    <property type="evidence" value="ECO:0000318"/>
    <property type="project" value="GO_Central"/>
</dbReference>
<dbReference type="InterPro" id="IPR004680">
    <property type="entry name" value="Cit_transptr-like_dom"/>
</dbReference>
<dbReference type="InterPro" id="IPR014738">
    <property type="entry name" value="Citrate_transporter"/>
</dbReference>
<dbReference type="NCBIfam" id="TIGR00784">
    <property type="entry name" value="citMHS"/>
    <property type="match status" value="1"/>
</dbReference>
<dbReference type="Pfam" id="PF03600">
    <property type="entry name" value="CitMHS"/>
    <property type="match status" value="1"/>
</dbReference>
<organism>
    <name type="scientific">Bacillus subtilis (strain 168)</name>
    <dbReference type="NCBI Taxonomy" id="224308"/>
    <lineage>
        <taxon>Bacteria</taxon>
        <taxon>Bacillati</taxon>
        <taxon>Bacillota</taxon>
        <taxon>Bacilli</taxon>
        <taxon>Bacillales</taxon>
        <taxon>Bacillaceae</taxon>
        <taxon>Bacillus</taxon>
    </lineage>
</organism>
<comment type="function">
    <text>Transports the free citrate anion. Probably cotransports citrate and at least three or four protons. The citrate uptake is inhibited by the presence of magnesium ions.</text>
</comment>
<comment type="subcellular location">
    <subcellularLocation>
        <location evidence="2">Cell membrane</location>
        <topology evidence="2">Multi-pass membrane protein</topology>
    </subcellularLocation>
</comment>
<comment type="similarity">
    <text evidence="2">Belongs to the CitM (TC 2.A.11) transporter family.</text>
</comment>